<proteinExistence type="evidence at protein level"/>
<sequence>MTVLEITLAVILTLLGLAILAILLTRWARCKQSEMYISRYSSEQSARLLDYEDGRGSRHAYSTQSDTSYDNRERSKRDYTPSTNSLVSMASKFSLGQTELILLLMCFILALSRSSIGSIKCLQTTEEPPSRTAGAMMQFTAPIPGATGPIKLSQKTIVQTPGPIVQYPGSNAGPPSAPRGPPMAPIIISQRTARIPQVHTMDSSGKITLTPVVILTGYMDEELAKKSCSKIQILKCGGTARSQNSREENKEALKNDIIFTNSVESLKSAHIKEPEREGKGTDLEKDKIGMEVKVDSDAGIPKRQETQLKISEMSIPQGQGAQIKKSVSDVPRGQESQVKKSESGVPKGQEAQVTKSGLVVLKGQEAQVEKSEMGVPRRQESQVKKSQSGVSKGQEAQVKKRESVVLKGQEAQVEKSELKVPKGQEGQVEKTEADVPKEQEVQEKKSEAGVLKGPESQVKNTEVSVPETLESQVKKSESGVLKGQEAQEKKESFEDKGNNDKEKERDAEKDPNKKEKGDKNTKGDKGKDKVKGKRESEINGEKSKGSKRAKANTGRKYNKKVEE</sequence>
<evidence type="ECO:0000255" key="1"/>
<evidence type="ECO:0000256" key="2">
    <source>
        <dbReference type="SAM" id="MobiDB-lite"/>
    </source>
</evidence>
<evidence type="ECO:0000269" key="3">
    <source>
    </source>
</evidence>
<evidence type="ECO:0000269" key="4">
    <source>
    </source>
</evidence>
<evidence type="ECO:0000305" key="5"/>
<evidence type="ECO:0000312" key="6">
    <source>
        <dbReference type="HGNC" id="HGNC:13922"/>
    </source>
</evidence>
<protein>
    <recommendedName>
        <fullName evidence="5">Testis-expressed basic protein 1</fullName>
    </recommendedName>
    <alternativeName>
        <fullName evidence="5">Uncharacterized protein C6orf10</fullName>
    </alternativeName>
</protein>
<gene>
    <name evidence="6" type="primary">TSBP1</name>
    <name evidence="6" type="synonym">C6orf10</name>
</gene>
<dbReference type="EMBL" id="AL034394">
    <property type="protein sequence ID" value="CAI42178.1"/>
    <property type="molecule type" value="Genomic_DNA"/>
</dbReference>
<dbReference type="EMBL" id="AL035445">
    <property type="protein sequence ID" value="CAI42178.1"/>
    <property type="status" value="JOINED"/>
    <property type="molecule type" value="Genomic_DNA"/>
</dbReference>
<dbReference type="EMBL" id="AL034394">
    <property type="protein sequence ID" value="CAI42179.1"/>
    <property type="molecule type" value="Genomic_DNA"/>
</dbReference>
<dbReference type="EMBL" id="AL035445">
    <property type="protein sequence ID" value="CAI42179.1"/>
    <property type="status" value="JOINED"/>
    <property type="molecule type" value="Genomic_DNA"/>
</dbReference>
<dbReference type="EMBL" id="AL035445">
    <property type="protein sequence ID" value="CAI20345.1"/>
    <property type="molecule type" value="Genomic_DNA"/>
</dbReference>
<dbReference type="EMBL" id="AL034394">
    <property type="protein sequence ID" value="CAI20345.1"/>
    <property type="status" value="JOINED"/>
    <property type="molecule type" value="Genomic_DNA"/>
</dbReference>
<dbReference type="EMBL" id="AL035445">
    <property type="protein sequence ID" value="CAI20346.1"/>
    <property type="molecule type" value="Genomic_DNA"/>
</dbReference>
<dbReference type="EMBL" id="AL034394">
    <property type="protein sequence ID" value="CAI20346.1"/>
    <property type="status" value="JOINED"/>
    <property type="molecule type" value="Genomic_DNA"/>
</dbReference>
<dbReference type="EMBL" id="AL662796">
    <property type="status" value="NOT_ANNOTATED_CDS"/>
    <property type="molecule type" value="Genomic_DNA"/>
</dbReference>
<dbReference type="EMBL" id="AL670296">
    <property type="status" value="NOT_ANNOTATED_CDS"/>
    <property type="molecule type" value="Genomic_DNA"/>
</dbReference>
<dbReference type="EMBL" id="AL845557">
    <property type="status" value="NOT_ANNOTATED_CDS"/>
    <property type="molecule type" value="Genomic_DNA"/>
</dbReference>
<dbReference type="EMBL" id="AL671511">
    <property type="status" value="NOT_ANNOTATED_CDS"/>
    <property type="molecule type" value="Genomic_DNA"/>
</dbReference>
<dbReference type="EMBL" id="AL845509">
    <property type="status" value="NOT_ANNOTATED_CDS"/>
    <property type="molecule type" value="Genomic_DNA"/>
</dbReference>
<dbReference type="EMBL" id="BX001039">
    <property type="status" value="NOT_ANNOTATED_CDS"/>
    <property type="molecule type" value="Genomic_DNA"/>
</dbReference>
<dbReference type="EMBL" id="BX119999">
    <property type="status" value="NOT_ANNOTATED_CDS"/>
    <property type="molecule type" value="Genomic_DNA"/>
</dbReference>
<dbReference type="EMBL" id="BX255945">
    <property type="status" value="NOT_ANNOTATED_CDS"/>
    <property type="molecule type" value="Genomic_DNA"/>
</dbReference>
<dbReference type="EMBL" id="BX284927">
    <property type="status" value="NOT_ANNOTATED_CDS"/>
    <property type="molecule type" value="Genomic_DNA"/>
</dbReference>
<dbReference type="EMBL" id="BX908732">
    <property type="status" value="NOT_ANNOTATED_CDS"/>
    <property type="molecule type" value="Genomic_DNA"/>
</dbReference>
<dbReference type="EMBL" id="BX927180">
    <property type="status" value="NOT_ANNOTATED_CDS"/>
    <property type="molecule type" value="Genomic_DNA"/>
</dbReference>
<dbReference type="EMBL" id="BC034774">
    <property type="protein sequence ID" value="AAH34774.1"/>
    <property type="molecule type" value="mRNA"/>
</dbReference>
<dbReference type="CCDS" id="CCDS34422.1">
    <molecule id="Q5SRN2-1"/>
</dbReference>
<dbReference type="CCDS" id="CCDS69082.1">
    <molecule id="Q5SRN2-3"/>
</dbReference>
<dbReference type="RefSeq" id="NP_001273403.1">
    <molecule id="Q5SRN2-3"/>
    <property type="nucleotide sequence ID" value="NM_001286474.2"/>
</dbReference>
<dbReference type="RefSeq" id="NP_001273404.1">
    <property type="nucleotide sequence ID" value="NM_001286475.1"/>
</dbReference>
<dbReference type="RefSeq" id="NP_006772.3">
    <molecule id="Q5SRN2-1"/>
    <property type="nucleotide sequence ID" value="NM_006781.4"/>
</dbReference>
<dbReference type="SMR" id="Q5SRN2"/>
<dbReference type="BioGRID" id="115907">
    <property type="interactions" value="3"/>
</dbReference>
<dbReference type="FunCoup" id="Q5SRN2">
    <property type="interactions" value="9"/>
</dbReference>
<dbReference type="IntAct" id="Q5SRN2">
    <property type="interactions" value="1"/>
</dbReference>
<dbReference type="STRING" id="9606.ENSP00000415517"/>
<dbReference type="GlyGen" id="Q5SRN2">
    <property type="glycosylation" value="1 site, 1 O-linked glycan (1 site)"/>
</dbReference>
<dbReference type="iPTMnet" id="Q5SRN2"/>
<dbReference type="PhosphoSitePlus" id="Q5SRN2"/>
<dbReference type="BioMuta" id="C6orf10"/>
<dbReference type="DMDM" id="317373458"/>
<dbReference type="jPOST" id="Q5SRN2"/>
<dbReference type="MassIVE" id="Q5SRN2"/>
<dbReference type="PaxDb" id="9606-ENSP00000415517"/>
<dbReference type="PeptideAtlas" id="Q5SRN2"/>
<dbReference type="ProteomicsDB" id="22058"/>
<dbReference type="ProteomicsDB" id="63857">
    <molecule id="Q5SRN2-1"/>
</dbReference>
<dbReference type="ProteomicsDB" id="63858">
    <molecule id="Q5SRN2-2"/>
</dbReference>
<dbReference type="Antibodypedia" id="45527">
    <property type="antibodies" value="51 antibodies from 13 providers"/>
</dbReference>
<dbReference type="DNASU" id="10665"/>
<dbReference type="Ensembl" id="ENST00000375015.8">
    <molecule id="Q5SRN2-2"/>
    <property type="protein sequence ID" value="ENSP00000364155.4"/>
    <property type="gene ID" value="ENSG00000204296.13"/>
</dbReference>
<dbReference type="Ensembl" id="ENST00000383130.7">
    <molecule id="Q5SRN2-1"/>
    <property type="protein sequence ID" value="ENSP00000372611.3"/>
    <property type="gene ID" value="ENSG00000206245.11"/>
</dbReference>
<dbReference type="Ensembl" id="ENST00000399749.5">
    <property type="protein sequence ID" value="ENSP00000382654.1"/>
    <property type="gene ID" value="ENSG00000206310.8"/>
</dbReference>
<dbReference type="Ensembl" id="ENST00000447241.6">
    <molecule id="Q5SRN2-1"/>
    <property type="protein sequence ID" value="ENSP00000415517.2"/>
    <property type="gene ID" value="ENSG00000204296.13"/>
</dbReference>
<dbReference type="Ensembl" id="ENST00000448986.6">
    <molecule id="Q5SRN2-2"/>
    <property type="protein sequence ID" value="ENSP00000410514.2"/>
    <property type="gene ID" value="ENSG00000206245.11"/>
</dbReference>
<dbReference type="Ensembl" id="ENST00000457429.5">
    <property type="protein sequence ID" value="ENSP00000408514.1"/>
    <property type="gene ID" value="ENSG00000232106.9"/>
</dbReference>
<dbReference type="Ensembl" id="ENST00000533191.6">
    <molecule id="Q5SRN2-3"/>
    <property type="protein sequence ID" value="ENSP00000431199.1"/>
    <property type="gene ID" value="ENSG00000204296.13"/>
</dbReference>
<dbReference type="Ensembl" id="ENST00000548927.4">
    <molecule id="Q5SRN2-3"/>
    <property type="protein sequence ID" value="ENSP00000448472.2"/>
    <property type="gene ID" value="ENSG00000206245.11"/>
</dbReference>
<dbReference type="Ensembl" id="ENST00000618584.4">
    <molecule id="Q5SRN2-1"/>
    <property type="protein sequence ID" value="ENSP00000485011.1"/>
    <property type="gene ID" value="ENSG00000206245.11"/>
</dbReference>
<dbReference type="GeneID" id="10665"/>
<dbReference type="KEGG" id="hsa:10665"/>
<dbReference type="MANE-Select" id="ENST00000533191.6">
    <molecule id="Q5SRN2-3"/>
    <property type="protein sequence ID" value="ENSP00000431199.1"/>
    <property type="RefSeq nucleotide sequence ID" value="NM_001286474.2"/>
    <property type="RefSeq protein sequence ID" value="NP_001273403.1"/>
</dbReference>
<dbReference type="UCSC" id="uc011jsa.4">
    <molecule id="Q5SRN2-1"/>
    <property type="organism name" value="human"/>
</dbReference>
<dbReference type="AGR" id="HGNC:13922"/>
<dbReference type="CTD" id="10665"/>
<dbReference type="DisGeNET" id="10665"/>
<dbReference type="GeneCards" id="TSBP1"/>
<dbReference type="HGNC" id="HGNC:13922">
    <property type="gene designation" value="TSBP1"/>
</dbReference>
<dbReference type="HPA" id="ENSG00000204296">
    <property type="expression patterns" value="Tissue enriched (testis)"/>
</dbReference>
<dbReference type="MIM" id="618151">
    <property type="type" value="gene"/>
</dbReference>
<dbReference type="neXtProt" id="NX_Q5SRN2"/>
<dbReference type="OpenTargets" id="ENSG00000204296"/>
<dbReference type="PharmGKB" id="PA25923"/>
<dbReference type="VEuPathDB" id="HostDB:ENSG00000204296"/>
<dbReference type="eggNOG" id="ENOG502SCHC">
    <property type="taxonomic scope" value="Eukaryota"/>
</dbReference>
<dbReference type="GeneTree" id="ENSGT00530000064839"/>
<dbReference type="HOGENOM" id="CLU_034814_1_0_1"/>
<dbReference type="InParanoid" id="Q5SRN2"/>
<dbReference type="OMA" id="IEEPLCK"/>
<dbReference type="OrthoDB" id="9539314at2759"/>
<dbReference type="PAN-GO" id="Q5SRN2">
    <property type="GO annotations" value="0 GO annotations based on evolutionary models"/>
</dbReference>
<dbReference type="PhylomeDB" id="Q5SRN2"/>
<dbReference type="TreeFam" id="TF342352"/>
<dbReference type="PathwayCommons" id="Q5SRN2"/>
<dbReference type="BioGRID-ORCS" id="10665">
    <property type="hits" value="10 hits in 1125 CRISPR screens"/>
</dbReference>
<dbReference type="ChiTaRS" id="C6orf10">
    <property type="organism name" value="human"/>
</dbReference>
<dbReference type="GeneWiki" id="C6orf10"/>
<dbReference type="GenomeRNAi" id="10665"/>
<dbReference type="Pharos" id="Q5SRN2">
    <property type="development level" value="Tbio"/>
</dbReference>
<dbReference type="PRO" id="PR:Q5SRN2"/>
<dbReference type="Proteomes" id="UP000005640">
    <property type="component" value="Chromosome 6"/>
</dbReference>
<dbReference type="RNAct" id="Q5SRN2">
    <property type="molecule type" value="protein"/>
</dbReference>
<dbReference type="Bgee" id="ENSG00000204296">
    <property type="expression patterns" value="Expressed in left testis and 44 other cell types or tissues"/>
</dbReference>
<dbReference type="ExpressionAtlas" id="Q5SRN2">
    <property type="expression patterns" value="baseline and differential"/>
</dbReference>
<dbReference type="GO" id="GO:0016020">
    <property type="term" value="C:membrane"/>
    <property type="evidence" value="ECO:0007669"/>
    <property type="project" value="UniProtKB-SubCell"/>
</dbReference>
<dbReference type="GO" id="GO:0005634">
    <property type="term" value="C:nucleus"/>
    <property type="evidence" value="ECO:0007005"/>
    <property type="project" value="UniProtKB"/>
</dbReference>
<dbReference type="InterPro" id="IPR038754">
    <property type="entry name" value="TSBP1"/>
</dbReference>
<dbReference type="PANTHER" id="PTHR14368">
    <property type="entry name" value="TESTIS-EXPRESSED BASIC PROTEIN 1"/>
    <property type="match status" value="1"/>
</dbReference>
<dbReference type="PANTHER" id="PTHR14368:SF7">
    <property type="entry name" value="TESTIS-EXPRESSED BASIC PROTEIN 1"/>
    <property type="match status" value="1"/>
</dbReference>
<name>TSBP1_HUMAN</name>
<accession>Q5SRN2</accession>
<accession>A2BET1</accession>
<accession>A2BET2</accession>
<accession>A6NME2</accession>
<accession>B0S7R2</accession>
<accession>B0S7R3</accession>
<accession>E9PMB1</accession>
<accession>Q5SPI9</accession>
<accession>Q5SPJ0</accession>
<accession>Q5SPK9</accession>
<accession>Q5SPL0</accession>
<accession>Q5SRN3</accession>
<accession>Q5TG25</accession>
<accession>Q5TG26</accession>
<accession>Q8N4B6</accession>
<comment type="subcellular location">
    <subcellularLocation>
        <location evidence="5">Membrane</location>
        <topology evidence="5">Multi-pass membrane protein</topology>
    </subcellularLocation>
</comment>
<comment type="alternative products">
    <event type="alternative splicing"/>
    <isoform>
        <id>Q5SRN2-1</id>
        <name>1</name>
        <sequence type="displayed"/>
    </isoform>
    <isoform>
        <id>Q5SRN2-2</id>
        <name>2</name>
        <sequence type="described" ref="VSP_014645 VSP_014646 VSP_014647"/>
    </isoform>
    <isoform>
        <id>Q5SRN2-3</id>
        <name>3</name>
        <sequence type="described" ref="VSP_014645 VSP_055702"/>
    </isoform>
</comment>
<reference key="1">
    <citation type="journal article" date="2003" name="Nature">
        <title>The DNA sequence and analysis of human chromosome 6.</title>
        <authorList>
            <person name="Mungall A.J."/>
            <person name="Palmer S.A."/>
            <person name="Sims S.K."/>
            <person name="Edwards C.A."/>
            <person name="Ashurst J.L."/>
            <person name="Wilming L."/>
            <person name="Jones M.C."/>
            <person name="Horton R."/>
            <person name="Hunt S.E."/>
            <person name="Scott C.E."/>
            <person name="Gilbert J.G.R."/>
            <person name="Clamp M.E."/>
            <person name="Bethel G."/>
            <person name="Milne S."/>
            <person name="Ainscough R."/>
            <person name="Almeida J.P."/>
            <person name="Ambrose K.D."/>
            <person name="Andrews T.D."/>
            <person name="Ashwell R.I.S."/>
            <person name="Babbage A.K."/>
            <person name="Bagguley C.L."/>
            <person name="Bailey J."/>
            <person name="Banerjee R."/>
            <person name="Barker D.J."/>
            <person name="Barlow K.F."/>
            <person name="Bates K."/>
            <person name="Beare D.M."/>
            <person name="Beasley H."/>
            <person name="Beasley O."/>
            <person name="Bird C.P."/>
            <person name="Blakey S.E."/>
            <person name="Bray-Allen S."/>
            <person name="Brook J."/>
            <person name="Brown A.J."/>
            <person name="Brown J.Y."/>
            <person name="Burford D.C."/>
            <person name="Burrill W."/>
            <person name="Burton J."/>
            <person name="Carder C."/>
            <person name="Carter N.P."/>
            <person name="Chapman J.C."/>
            <person name="Clark S.Y."/>
            <person name="Clark G."/>
            <person name="Clee C.M."/>
            <person name="Clegg S."/>
            <person name="Cobley V."/>
            <person name="Collier R.E."/>
            <person name="Collins J.E."/>
            <person name="Colman L.K."/>
            <person name="Corby N.R."/>
            <person name="Coville G.J."/>
            <person name="Culley K.M."/>
            <person name="Dhami P."/>
            <person name="Davies J."/>
            <person name="Dunn M."/>
            <person name="Earthrowl M.E."/>
            <person name="Ellington A.E."/>
            <person name="Evans K.A."/>
            <person name="Faulkner L."/>
            <person name="Francis M.D."/>
            <person name="Frankish A."/>
            <person name="Frankland J."/>
            <person name="French L."/>
            <person name="Garner P."/>
            <person name="Garnett J."/>
            <person name="Ghori M.J."/>
            <person name="Gilby L.M."/>
            <person name="Gillson C.J."/>
            <person name="Glithero R.J."/>
            <person name="Grafham D.V."/>
            <person name="Grant M."/>
            <person name="Gribble S."/>
            <person name="Griffiths C."/>
            <person name="Griffiths M.N.D."/>
            <person name="Hall R."/>
            <person name="Halls K.S."/>
            <person name="Hammond S."/>
            <person name="Harley J.L."/>
            <person name="Hart E.A."/>
            <person name="Heath P.D."/>
            <person name="Heathcott R."/>
            <person name="Holmes S.J."/>
            <person name="Howden P.J."/>
            <person name="Howe K.L."/>
            <person name="Howell G.R."/>
            <person name="Huckle E."/>
            <person name="Humphray S.J."/>
            <person name="Humphries M.D."/>
            <person name="Hunt A.R."/>
            <person name="Johnson C.M."/>
            <person name="Joy A.A."/>
            <person name="Kay M."/>
            <person name="Keenan S.J."/>
            <person name="Kimberley A.M."/>
            <person name="King A."/>
            <person name="Laird G.K."/>
            <person name="Langford C."/>
            <person name="Lawlor S."/>
            <person name="Leongamornlert D.A."/>
            <person name="Leversha M."/>
            <person name="Lloyd C.R."/>
            <person name="Lloyd D.M."/>
            <person name="Loveland J.E."/>
            <person name="Lovell J."/>
            <person name="Martin S."/>
            <person name="Mashreghi-Mohammadi M."/>
            <person name="Maslen G.L."/>
            <person name="Matthews L."/>
            <person name="McCann O.T."/>
            <person name="McLaren S.J."/>
            <person name="McLay K."/>
            <person name="McMurray A."/>
            <person name="Moore M.J.F."/>
            <person name="Mullikin J.C."/>
            <person name="Niblett D."/>
            <person name="Nickerson T."/>
            <person name="Novik K.L."/>
            <person name="Oliver K."/>
            <person name="Overton-Larty E.K."/>
            <person name="Parker A."/>
            <person name="Patel R."/>
            <person name="Pearce A.V."/>
            <person name="Peck A.I."/>
            <person name="Phillimore B.J.C.T."/>
            <person name="Phillips S."/>
            <person name="Plumb R.W."/>
            <person name="Porter K.M."/>
            <person name="Ramsey Y."/>
            <person name="Ranby S.A."/>
            <person name="Rice C.M."/>
            <person name="Ross M.T."/>
            <person name="Searle S.M."/>
            <person name="Sehra H.K."/>
            <person name="Sheridan E."/>
            <person name="Skuce C.D."/>
            <person name="Smith S."/>
            <person name="Smith M."/>
            <person name="Spraggon L."/>
            <person name="Squares S.L."/>
            <person name="Steward C.A."/>
            <person name="Sycamore N."/>
            <person name="Tamlyn-Hall G."/>
            <person name="Tester J."/>
            <person name="Theaker A.J."/>
            <person name="Thomas D.W."/>
            <person name="Thorpe A."/>
            <person name="Tracey A."/>
            <person name="Tromans A."/>
            <person name="Tubby B."/>
            <person name="Wall M."/>
            <person name="Wallis J.M."/>
            <person name="West A.P."/>
            <person name="White S.S."/>
            <person name="Whitehead S.L."/>
            <person name="Whittaker H."/>
            <person name="Wild A."/>
            <person name="Willey D.J."/>
            <person name="Wilmer T.E."/>
            <person name="Wood J.M."/>
            <person name="Wray P.W."/>
            <person name="Wyatt J.C."/>
            <person name="Young L."/>
            <person name="Younger R.M."/>
            <person name="Bentley D.R."/>
            <person name="Coulson A."/>
            <person name="Durbin R.M."/>
            <person name="Hubbard T."/>
            <person name="Sulston J.E."/>
            <person name="Dunham I."/>
            <person name="Rogers J."/>
            <person name="Beck S."/>
        </authorList>
    </citation>
    <scope>NUCLEOTIDE SEQUENCE [LARGE SCALE GENOMIC DNA]</scope>
    <scope>VARIANTS ARG-30; HIS-36; CYS-69; LEU-128; PHE-150; LEU-161; PRO-170; PRO-227; VAL-315 AND GLN-400</scope>
</reference>
<reference key="2">
    <citation type="journal article" date="2004" name="Genome Res.">
        <title>The status, quality, and expansion of the NIH full-length cDNA project: the Mammalian Gene Collection (MGC).</title>
        <authorList>
            <consortium name="The MGC Project Team"/>
        </authorList>
    </citation>
    <scope>NUCLEOTIDE SEQUENCE [LARGE SCALE MRNA] (ISOFORM 1)</scope>
    <scope>VARIANTS ARG-30; HIS-36; CYS-69; LEU-128; PRO-170 AND PRO-227</scope>
    <source>
        <tissue>Brain</tissue>
    </source>
</reference>
<feature type="chain" id="PRO_0000089503" description="Testis-expressed basic protein 1">
    <location>
        <begin position="1"/>
        <end position="563"/>
    </location>
</feature>
<feature type="transmembrane region" description="Helical" evidence="1">
    <location>
        <begin position="3"/>
        <end position="23"/>
    </location>
</feature>
<feature type="transmembrane region" description="Helical" evidence="1">
    <location>
        <begin position="99"/>
        <end position="119"/>
    </location>
</feature>
<feature type="region of interest" description="Disordered" evidence="2">
    <location>
        <begin position="56"/>
        <end position="81"/>
    </location>
</feature>
<feature type="region of interest" description="Disordered" evidence="2">
    <location>
        <begin position="311"/>
        <end position="563"/>
    </location>
</feature>
<feature type="compositionally biased region" description="Basic and acidic residues" evidence="2">
    <location>
        <begin position="69"/>
        <end position="79"/>
    </location>
</feature>
<feature type="compositionally biased region" description="Basic and acidic residues" evidence="2">
    <location>
        <begin position="367"/>
        <end position="383"/>
    </location>
</feature>
<feature type="compositionally biased region" description="Low complexity" evidence="2">
    <location>
        <begin position="384"/>
        <end position="395"/>
    </location>
</feature>
<feature type="compositionally biased region" description="Basic and acidic residues" evidence="2">
    <location>
        <begin position="412"/>
        <end position="447"/>
    </location>
</feature>
<feature type="compositionally biased region" description="Basic and acidic residues" evidence="2">
    <location>
        <begin position="485"/>
        <end position="544"/>
    </location>
</feature>
<feature type="splice variant" id="VSP_014645" description="In isoform 2 and isoform 3." evidence="5">
    <original>VSMASKFSLGQTELILLLMCFILALSRSSIG</original>
    <variation>ALSRSSIALPQGSMS</variation>
    <location>
        <begin position="87"/>
        <end position="117"/>
    </location>
</feature>
<feature type="splice variant" id="VSP_014646" description="In isoform 2." evidence="5">
    <original>A</original>
    <variation>VRSHPHTIT</variation>
    <location>
        <position position="172"/>
    </location>
</feature>
<feature type="splice variant" id="VSP_014647" description="In isoform 2." evidence="5">
    <original>A</original>
    <variation>ASQLAAPI</variation>
    <location>
        <position position="193"/>
    </location>
</feature>
<feature type="splice variant" id="VSP_055702" description="In isoform 3." evidence="5">
    <original>A</original>
    <variation>ASQLAAPIIISQRTA</variation>
    <location>
        <position position="193"/>
    </location>
</feature>
<feature type="sequence variant" id="VAR_022875" description="In dbSNP:rs3129941." evidence="3 4">
    <original>C</original>
    <variation>R</variation>
    <location>
        <position position="30"/>
    </location>
</feature>
<feature type="sequence variant" id="VAR_022876" description="In dbSNP:rs9268384." evidence="3 4">
    <original>Y</original>
    <variation>H</variation>
    <location>
        <position position="36"/>
    </location>
</feature>
<feature type="sequence variant" id="VAR_022877" description="In dbSNP:rs9268368." evidence="3 4">
    <original>Y</original>
    <variation>C</variation>
    <location>
        <position position="69"/>
    </location>
</feature>
<feature type="sequence variant" id="VAR_022878" description="In dbSNP:rs1033500." evidence="3 4">
    <original>P</original>
    <variation>L</variation>
    <location>
        <position position="128"/>
    </location>
</feature>
<feature type="sequence variant" id="VAR_022879" description="In dbSNP:rs1265754." evidence="3">
    <original>I</original>
    <variation>F</variation>
    <location>
        <position position="150"/>
    </location>
</feature>
<feature type="sequence variant" id="VAR_033068" description="In dbSNP:rs1003878." evidence="3">
    <original>P</original>
    <variation>L</variation>
    <location>
        <position position="161"/>
    </location>
</feature>
<feature type="sequence variant" id="VAR_022880" description="In dbSNP:rs9405090." evidence="3 4">
    <original>S</original>
    <variation>P</variation>
    <location>
        <position position="170"/>
    </location>
</feature>
<feature type="sequence variant" id="VAR_022881" description="In dbSNP:rs560505." evidence="3 4">
    <original>S</original>
    <variation>P</variation>
    <location>
        <position position="227"/>
    </location>
</feature>
<feature type="sequence variant" id="VAR_056793" description="In dbSNP:rs4947338.">
    <original>L</original>
    <variation>W</variation>
    <location>
        <position position="266"/>
    </location>
</feature>
<feature type="sequence variant" id="VAR_056794" description="In dbSNP:rs34498363.">
    <original>P</original>
    <variation>S</variation>
    <location>
        <position position="274"/>
    </location>
</feature>
<feature type="sequence variant" id="VAR_022882" description="In dbSNP:rs3749966." evidence="3">
    <original>I</original>
    <variation>V</variation>
    <location>
        <position position="315"/>
    </location>
</feature>
<feature type="sequence variant" id="VAR_022883" description="In dbSNP:rs7775397." evidence="3">
    <original>K</original>
    <variation>Q</variation>
    <location>
        <position position="400"/>
    </location>
</feature>
<feature type="sequence variant" id="VAR_056795" description="In dbSNP:rs16870005.">
    <original>A</original>
    <variation>T</variation>
    <location>
        <position position="433"/>
    </location>
</feature>
<feature type="sequence variant" id="VAR_056796" description="In dbSNP:rs7751028.">
    <original>G</original>
    <variation>V</variation>
    <location>
        <position position="479"/>
    </location>
</feature>
<keyword id="KW-0025">Alternative splicing</keyword>
<keyword id="KW-0472">Membrane</keyword>
<keyword id="KW-1267">Proteomics identification</keyword>
<keyword id="KW-1185">Reference proteome</keyword>
<keyword id="KW-0812">Transmembrane</keyword>
<keyword id="KW-1133">Transmembrane helix</keyword>
<organism>
    <name type="scientific">Homo sapiens</name>
    <name type="common">Human</name>
    <dbReference type="NCBI Taxonomy" id="9606"/>
    <lineage>
        <taxon>Eukaryota</taxon>
        <taxon>Metazoa</taxon>
        <taxon>Chordata</taxon>
        <taxon>Craniata</taxon>
        <taxon>Vertebrata</taxon>
        <taxon>Euteleostomi</taxon>
        <taxon>Mammalia</taxon>
        <taxon>Eutheria</taxon>
        <taxon>Euarchontoglires</taxon>
        <taxon>Primates</taxon>
        <taxon>Haplorrhini</taxon>
        <taxon>Catarrhini</taxon>
        <taxon>Hominidae</taxon>
        <taxon>Homo</taxon>
    </lineage>
</organism>